<name>YACG_PECCP</name>
<accession>C6DET2</accession>
<proteinExistence type="inferred from homology"/>
<dbReference type="EMBL" id="CP001657">
    <property type="protein sequence ID" value="ACT14596.1"/>
    <property type="molecule type" value="Genomic_DNA"/>
</dbReference>
<dbReference type="RefSeq" id="WP_015841716.1">
    <property type="nucleotide sequence ID" value="NC_012917.1"/>
</dbReference>
<dbReference type="SMR" id="C6DET2"/>
<dbReference type="STRING" id="561230.PC1_3581"/>
<dbReference type="GeneID" id="67792612"/>
<dbReference type="KEGG" id="pct:PC1_3581"/>
<dbReference type="eggNOG" id="COG3024">
    <property type="taxonomic scope" value="Bacteria"/>
</dbReference>
<dbReference type="HOGENOM" id="CLU_178280_3_1_6"/>
<dbReference type="OrthoDB" id="9809663at2"/>
<dbReference type="Proteomes" id="UP000002736">
    <property type="component" value="Chromosome"/>
</dbReference>
<dbReference type="GO" id="GO:0008657">
    <property type="term" value="F:DNA topoisomerase type II (double strand cut, ATP-hydrolyzing) inhibitor activity"/>
    <property type="evidence" value="ECO:0007669"/>
    <property type="project" value="UniProtKB-UniRule"/>
</dbReference>
<dbReference type="GO" id="GO:0008270">
    <property type="term" value="F:zinc ion binding"/>
    <property type="evidence" value="ECO:0007669"/>
    <property type="project" value="UniProtKB-UniRule"/>
</dbReference>
<dbReference type="GO" id="GO:0006355">
    <property type="term" value="P:regulation of DNA-templated transcription"/>
    <property type="evidence" value="ECO:0007669"/>
    <property type="project" value="InterPro"/>
</dbReference>
<dbReference type="Gene3D" id="3.30.50.10">
    <property type="entry name" value="Erythroid Transcription Factor GATA-1, subunit A"/>
    <property type="match status" value="1"/>
</dbReference>
<dbReference type="HAMAP" id="MF_00649">
    <property type="entry name" value="DNA_gyrase_inhibitor_YacG"/>
    <property type="match status" value="1"/>
</dbReference>
<dbReference type="InterPro" id="IPR005584">
    <property type="entry name" value="DNA_gyrase_inhibitor_YacG"/>
</dbReference>
<dbReference type="InterPro" id="IPR013088">
    <property type="entry name" value="Znf_NHR/GATA"/>
</dbReference>
<dbReference type="NCBIfam" id="NF001638">
    <property type="entry name" value="PRK00418.1"/>
    <property type="match status" value="1"/>
</dbReference>
<dbReference type="PANTHER" id="PTHR36150">
    <property type="entry name" value="DNA GYRASE INHIBITOR YACG"/>
    <property type="match status" value="1"/>
</dbReference>
<dbReference type="PANTHER" id="PTHR36150:SF1">
    <property type="entry name" value="DNA GYRASE INHIBITOR YACG"/>
    <property type="match status" value="1"/>
</dbReference>
<dbReference type="Pfam" id="PF03884">
    <property type="entry name" value="YacG"/>
    <property type="match status" value="1"/>
</dbReference>
<dbReference type="SUPFAM" id="SSF57716">
    <property type="entry name" value="Glucocorticoid receptor-like (DNA-binding domain)"/>
    <property type="match status" value="1"/>
</dbReference>
<organism>
    <name type="scientific">Pectobacterium carotovorum subsp. carotovorum (strain PC1)</name>
    <dbReference type="NCBI Taxonomy" id="561230"/>
    <lineage>
        <taxon>Bacteria</taxon>
        <taxon>Pseudomonadati</taxon>
        <taxon>Pseudomonadota</taxon>
        <taxon>Gammaproteobacteria</taxon>
        <taxon>Enterobacterales</taxon>
        <taxon>Pectobacteriaceae</taxon>
        <taxon>Pectobacterium</taxon>
    </lineage>
</organism>
<sequence>MTTEITTVKCPTCKQAVVWDETSIYRPFCSKRCQLIDLGEWADEEKRIPSDDMVSDSEDWSETR</sequence>
<protein>
    <recommendedName>
        <fullName evidence="1">DNA gyrase inhibitor YacG</fullName>
    </recommendedName>
</protein>
<gene>
    <name evidence="1" type="primary">yacG</name>
    <name type="ordered locus">PC1_3581</name>
</gene>
<keyword id="KW-0479">Metal-binding</keyword>
<keyword id="KW-0862">Zinc</keyword>
<comment type="function">
    <text evidence="1">Inhibits all the catalytic activities of DNA gyrase by preventing its interaction with DNA. Acts by binding directly to the C-terminal domain of GyrB, which probably disrupts DNA binding by the gyrase.</text>
</comment>
<comment type="cofactor">
    <cofactor evidence="1">
        <name>Zn(2+)</name>
        <dbReference type="ChEBI" id="CHEBI:29105"/>
    </cofactor>
    <text evidence="1">Binds 1 zinc ion.</text>
</comment>
<comment type="subunit">
    <text evidence="1">Interacts with GyrB.</text>
</comment>
<comment type="similarity">
    <text evidence="1">Belongs to the DNA gyrase inhibitor YacG family.</text>
</comment>
<reference key="1">
    <citation type="submission" date="2009-07" db="EMBL/GenBank/DDBJ databases">
        <title>Complete sequence of Pectobacterium carotovorum subsp. carotovorum PC1.</title>
        <authorList>
            <consortium name="US DOE Joint Genome Institute"/>
            <person name="Lucas S."/>
            <person name="Copeland A."/>
            <person name="Lapidus A."/>
            <person name="Glavina del Rio T."/>
            <person name="Tice H."/>
            <person name="Bruce D."/>
            <person name="Goodwin L."/>
            <person name="Pitluck S."/>
            <person name="Munk A.C."/>
            <person name="Brettin T."/>
            <person name="Detter J.C."/>
            <person name="Han C."/>
            <person name="Tapia R."/>
            <person name="Larimer F."/>
            <person name="Land M."/>
            <person name="Hauser L."/>
            <person name="Kyrpides N."/>
            <person name="Mikhailova N."/>
            <person name="Balakrishnan V."/>
            <person name="Glasner J."/>
            <person name="Perna N.T."/>
        </authorList>
    </citation>
    <scope>NUCLEOTIDE SEQUENCE [LARGE SCALE GENOMIC DNA]</scope>
    <source>
        <strain>PC1</strain>
    </source>
</reference>
<evidence type="ECO:0000255" key="1">
    <source>
        <dbReference type="HAMAP-Rule" id="MF_00649"/>
    </source>
</evidence>
<feature type="chain" id="PRO_1000212400" description="DNA gyrase inhibitor YacG">
    <location>
        <begin position="1"/>
        <end position="64"/>
    </location>
</feature>
<feature type="binding site" evidence="1">
    <location>
        <position position="10"/>
    </location>
    <ligand>
        <name>Zn(2+)</name>
        <dbReference type="ChEBI" id="CHEBI:29105"/>
    </ligand>
</feature>
<feature type="binding site" evidence="1">
    <location>
        <position position="13"/>
    </location>
    <ligand>
        <name>Zn(2+)</name>
        <dbReference type="ChEBI" id="CHEBI:29105"/>
    </ligand>
</feature>
<feature type="binding site" evidence="1">
    <location>
        <position position="29"/>
    </location>
    <ligand>
        <name>Zn(2+)</name>
        <dbReference type="ChEBI" id="CHEBI:29105"/>
    </ligand>
</feature>
<feature type="binding site" evidence="1">
    <location>
        <position position="33"/>
    </location>
    <ligand>
        <name>Zn(2+)</name>
        <dbReference type="ChEBI" id="CHEBI:29105"/>
    </ligand>
</feature>